<gene>
    <name evidence="7" type="primary">CS</name>
</gene>
<organism>
    <name type="scientific">Mesocricetus auratus</name>
    <name type="common">Golden hamster</name>
    <dbReference type="NCBI Taxonomy" id="10036"/>
    <lineage>
        <taxon>Eukaryota</taxon>
        <taxon>Metazoa</taxon>
        <taxon>Chordata</taxon>
        <taxon>Craniata</taxon>
        <taxon>Vertebrata</taxon>
        <taxon>Euteleostomi</taxon>
        <taxon>Mammalia</taxon>
        <taxon>Eutheria</taxon>
        <taxon>Euarchontoglires</taxon>
        <taxon>Glires</taxon>
        <taxon>Rodentia</taxon>
        <taxon>Myomorpha</taxon>
        <taxon>Muroidea</taxon>
        <taxon>Cricetidae</taxon>
        <taxon>Cricetinae</taxon>
        <taxon>Mesocricetus</taxon>
    </lineage>
</organism>
<name>CISY_MESAU</name>
<dbReference type="EC" id="2.3.3.1"/>
<dbReference type="EMBL" id="DQ403127">
    <property type="protein sequence ID" value="ABD77260.1"/>
    <property type="molecule type" value="mRNA"/>
</dbReference>
<dbReference type="SMR" id="Q0QEL7"/>
<dbReference type="STRING" id="10036.ENSMAUP00000023353"/>
<dbReference type="eggNOG" id="KOG2617">
    <property type="taxonomic scope" value="Eukaryota"/>
</dbReference>
<dbReference type="UniPathway" id="UPA00223">
    <property type="reaction ID" value="UER00717"/>
</dbReference>
<dbReference type="Proteomes" id="UP000189706">
    <property type="component" value="Unplaced"/>
</dbReference>
<dbReference type="GO" id="GO:0005759">
    <property type="term" value="C:mitochondrial matrix"/>
    <property type="evidence" value="ECO:0007669"/>
    <property type="project" value="UniProtKB-SubCell"/>
</dbReference>
<dbReference type="GO" id="GO:0004108">
    <property type="term" value="F:citrate (Si)-synthase activity"/>
    <property type="evidence" value="ECO:0000250"/>
    <property type="project" value="UniProtKB"/>
</dbReference>
<dbReference type="GO" id="GO:0042802">
    <property type="term" value="F:identical protein binding"/>
    <property type="evidence" value="ECO:0000250"/>
    <property type="project" value="UniProtKB"/>
</dbReference>
<dbReference type="GO" id="GO:0005975">
    <property type="term" value="P:carbohydrate metabolic process"/>
    <property type="evidence" value="ECO:0007669"/>
    <property type="project" value="TreeGrafter"/>
</dbReference>
<dbReference type="GO" id="GO:0006099">
    <property type="term" value="P:tricarboxylic acid cycle"/>
    <property type="evidence" value="ECO:0007669"/>
    <property type="project" value="UniProtKB-UniPathway"/>
</dbReference>
<dbReference type="FunFam" id="1.10.230.10:FF:000001">
    <property type="entry name" value="Citrate synthase"/>
    <property type="match status" value="1"/>
</dbReference>
<dbReference type="Gene3D" id="1.10.580.10">
    <property type="entry name" value="Citrate Synthase, domain 1"/>
    <property type="match status" value="1"/>
</dbReference>
<dbReference type="Gene3D" id="1.10.230.10">
    <property type="entry name" value="Cytochrome P450-Terp, domain 2"/>
    <property type="match status" value="1"/>
</dbReference>
<dbReference type="InterPro" id="IPR016142">
    <property type="entry name" value="Citrate_synth-like_lrg_a-sub"/>
</dbReference>
<dbReference type="InterPro" id="IPR016143">
    <property type="entry name" value="Citrate_synth-like_sm_a-sub"/>
</dbReference>
<dbReference type="InterPro" id="IPR002020">
    <property type="entry name" value="Citrate_synthase"/>
</dbReference>
<dbReference type="InterPro" id="IPR019810">
    <property type="entry name" value="Citrate_synthase_AS"/>
</dbReference>
<dbReference type="InterPro" id="IPR036969">
    <property type="entry name" value="Citrate_synthase_sf"/>
</dbReference>
<dbReference type="NCBIfam" id="NF007128">
    <property type="entry name" value="PRK09569.1"/>
    <property type="match status" value="1"/>
</dbReference>
<dbReference type="PANTHER" id="PTHR11739">
    <property type="entry name" value="CITRATE SYNTHASE"/>
    <property type="match status" value="1"/>
</dbReference>
<dbReference type="PANTHER" id="PTHR11739:SF8">
    <property type="entry name" value="CITRATE SYNTHASE, MITOCHONDRIAL"/>
    <property type="match status" value="1"/>
</dbReference>
<dbReference type="Pfam" id="PF00285">
    <property type="entry name" value="Citrate_synt"/>
    <property type="match status" value="1"/>
</dbReference>
<dbReference type="PRINTS" id="PR00143">
    <property type="entry name" value="CITRTSNTHASE"/>
</dbReference>
<dbReference type="SUPFAM" id="SSF48256">
    <property type="entry name" value="Citrate synthase"/>
    <property type="match status" value="1"/>
</dbReference>
<dbReference type="PROSITE" id="PS00480">
    <property type="entry name" value="CITRATE_SYNTHASE"/>
    <property type="match status" value="1"/>
</dbReference>
<sequence length="213" mass="23884">GAIDSKLDWSHNFTNMLGYTEPQFTELMRLYLTIHSDHEGGNVSAHTSHLVGSALSDPYLSFAAAMNGLAGPLHGLANQEVLVWLTQLQKEVGKDVSDEKLRDYIWNTLNSGRVVPGYGHAVLRKTDPRYSCQREFALKHLPNDPLFKLVAQLYKIVPNILLEQGKAKNPWPNVDAHSGVLLQYYGMTEMNYYTVLFGVSRALGVLAQLIWSR</sequence>
<protein>
    <recommendedName>
        <fullName evidence="2">Citrate synthase, mitochondrial</fullName>
        <ecNumber>2.3.3.1</ecNumber>
    </recommendedName>
    <alternativeName>
        <fullName>Citrate (Si)-synthase</fullName>
    </alternativeName>
</protein>
<comment type="function">
    <text evidence="6">Key enzyme of the Krebs tricarboxylic acid cycle which catalyzes the synthesis of citrate from acetyl coenzyme A and oxaloacetate.</text>
</comment>
<comment type="catalytic activity">
    <reaction evidence="5">
        <text>oxaloacetate + acetyl-CoA + H2O = citrate + CoA + H(+)</text>
        <dbReference type="Rhea" id="RHEA:16845"/>
        <dbReference type="ChEBI" id="CHEBI:15377"/>
        <dbReference type="ChEBI" id="CHEBI:15378"/>
        <dbReference type="ChEBI" id="CHEBI:16452"/>
        <dbReference type="ChEBI" id="CHEBI:16947"/>
        <dbReference type="ChEBI" id="CHEBI:57287"/>
        <dbReference type="ChEBI" id="CHEBI:57288"/>
        <dbReference type="EC" id="2.3.3.1"/>
    </reaction>
</comment>
<comment type="pathway">
    <text evidence="2">Carbohydrate metabolism; tricarboxylic acid cycle; isocitrate from oxaloacetate: step 1/2.</text>
</comment>
<comment type="subunit">
    <text evidence="2">Homodimer.</text>
</comment>
<comment type="subcellular location">
    <subcellularLocation>
        <location evidence="2">Mitochondrion matrix</location>
    </subcellularLocation>
</comment>
<comment type="PTM">
    <text evidence="1">In response to mitochondrial stress, the precursor protein is ubiquitinated by the SIFI complex in the cytoplasm before mitochondrial import, leading to its degradation. Within the SIFI complex, UBR4 initiates ubiquitin chain that are further elongated or branched by KCMF1.</text>
</comment>
<comment type="miscellaneous">
    <text evidence="6">Citrate synthase is found in nearly all cells capable of oxidative metabolism.</text>
</comment>
<comment type="similarity">
    <text evidence="4">Belongs to the citrate synthase family.</text>
</comment>
<feature type="chain" id="PRO_0000394310" description="Citrate synthase, mitochondrial">
    <location>
        <begin position="1" status="less than"/>
        <end position="213" status="greater than"/>
    </location>
</feature>
<feature type="active site" evidence="2 5">
    <location>
        <position position="74"/>
    </location>
</feature>
<feature type="active site" evidence="2 5">
    <location>
        <position position="120"/>
    </location>
</feature>
<feature type="active site" evidence="2 5">
    <location>
        <position position="175"/>
    </location>
</feature>
<feature type="binding site" description="in chain A" evidence="1">
    <location>
        <position position="129"/>
    </location>
    <ligand>
        <name>oxaloacetate</name>
        <dbReference type="ChEBI" id="CHEBI:16452"/>
        <note>ligand shared between homodimeric partners</note>
    </ligand>
</feature>
<feature type="binding site" description="in chain A" evidence="1">
    <location>
        <position position="201"/>
    </location>
    <ligand>
        <name>oxaloacetate</name>
        <dbReference type="ChEBI" id="CHEBI:16452"/>
        <note>ligand shared between homodimeric partners</note>
    </ligand>
</feature>
<feature type="modified residue" description="N6-acetyllysine; alternate" evidence="3">
    <location>
        <position position="94"/>
    </location>
</feature>
<feature type="modified residue" description="N6-succinyllysine; alternate" evidence="3">
    <location>
        <position position="94"/>
    </location>
</feature>
<feature type="modified residue" description="N6-acetyllysine; alternate" evidence="1">
    <location>
        <position position="100"/>
    </location>
</feature>
<feature type="modified residue" description="N6-succinyllysine; alternate" evidence="3">
    <location>
        <position position="100"/>
    </location>
</feature>
<feature type="modified residue" description="N6-acetyllysine; alternate" evidence="1">
    <location>
        <position position="148"/>
    </location>
</feature>
<feature type="modified residue" description="N6-succinyllysine; alternate" evidence="3">
    <location>
        <position position="148"/>
    </location>
</feature>
<feature type="modified residue" description="N6-acetyllysine" evidence="1">
    <location>
        <position position="155"/>
    </location>
</feature>
<feature type="modified residue" description="N6-acetyllysine; alternate" evidence="1">
    <location>
        <position position="166"/>
    </location>
</feature>
<feature type="modified residue" description="N6-succinyllysine; alternate" evidence="3">
    <location>
        <position position="166"/>
    </location>
</feature>
<feature type="modified residue" description="N6,N6,N6-trimethyllysine" evidence="1">
    <location>
        <position position="168"/>
    </location>
</feature>
<feature type="non-terminal residue" evidence="7">
    <location>
        <position position="1"/>
    </location>
</feature>
<feature type="non-terminal residue" evidence="7">
    <location>
        <position position="213"/>
    </location>
</feature>
<evidence type="ECO:0000250" key="1">
    <source>
        <dbReference type="UniProtKB" id="O75390"/>
    </source>
</evidence>
<evidence type="ECO:0000250" key="2">
    <source>
        <dbReference type="UniProtKB" id="P00889"/>
    </source>
</evidence>
<evidence type="ECO:0000250" key="3">
    <source>
        <dbReference type="UniProtKB" id="Q9CZU6"/>
    </source>
</evidence>
<evidence type="ECO:0000255" key="4"/>
<evidence type="ECO:0000255" key="5">
    <source>
        <dbReference type="PROSITE-ProRule" id="PRU10117"/>
    </source>
</evidence>
<evidence type="ECO:0000305" key="6"/>
<evidence type="ECO:0000312" key="7">
    <source>
        <dbReference type="EMBL" id="ABD77260.1"/>
    </source>
</evidence>
<proteinExistence type="evidence at protein level"/>
<reference evidence="7" key="1">
    <citation type="journal article" date="2006" name="Mol. Biol. Evol.">
        <title>Housekeeping genes for phylogenetic analysis of eutherian relationships.</title>
        <authorList>
            <person name="Kullberg M."/>
            <person name="Nilsson M.A."/>
            <person name="Arnason U."/>
            <person name="Harley E.H."/>
            <person name="Janke A."/>
        </authorList>
    </citation>
    <scope>NUCLEOTIDE SEQUENCE [MRNA]</scope>
    <source>
        <tissue evidence="7">Liver</tissue>
    </source>
</reference>
<reference key="2">
    <citation type="journal article" date="2010" name="Asian J. Androl.">
        <title>Glucose-regulated protein precursor (GRP78) and tumor rejection antigen (GP96) are unique to hamster caput epididymal spermatozoa.</title>
        <authorList>
            <person name="Kameshwari D.B."/>
            <person name="Bhande S."/>
            <person name="Sundaram C.S."/>
            <person name="Kota V."/>
            <person name="Siva A.B."/>
            <person name="Shivaji S."/>
        </authorList>
    </citation>
    <scope>IDENTIFICATION BY MASS SPECTROMETRY</scope>
</reference>
<accession>Q0QEL7</accession>
<accession>P86224</accession>
<keyword id="KW-0007">Acetylation</keyword>
<keyword id="KW-0488">Methylation</keyword>
<keyword id="KW-0496">Mitochondrion</keyword>
<keyword id="KW-1185">Reference proteome</keyword>
<keyword id="KW-0808">Transferase</keyword>
<keyword id="KW-0816">Tricarboxylic acid cycle</keyword>
<keyword id="KW-0832">Ubl conjugation</keyword>